<name>SYP_NATPD</name>
<sequence length="482" mass="54269">MTDQELGITESKEHNPGEWYAEVVQKAGLADYAPMGGFIVTRPRGYALWERLQDHLDGWFKETGVQNTYFPMFIPESYLEREKDIVDGFDPEVAWVTHGGHDELEERLAVRPTSESIITPFIAEWVRSYRDLPLRVNQWCSVVRWEATETKPFFRTKEFLWQEGHTAHATEESAWDETMTRLEQYERLYEEVMAIPGMTGRKPEHDKFPGADTTTTIEALMPDGKSVQAGTSHYLGTSFAEAFDIEYTDEDETKQTAHTTSWGLSWRALGALIMTHSDDQGLVIPPALAPTQVVVVPIWQADTEEAVKEYAADLAAELDEQFRVELDDRDERNPGFKFNEHELQGVPLRIEIGPNEVEDEAATLVHRPDGESDVAERESITDAVDEALETVYAKLYASAEATLEENIRKAHGRGEILGTLGQHGGYVKTGWCGDEACEAEIKDEIAAEIVMLPLDEDEPPVYDTCGVCGDEATETAYFAKSY</sequence>
<organism>
    <name type="scientific">Natronomonas pharaonis (strain ATCC 35678 / DSM 2160 / CIP 103997 / JCM 8858 / NBRC 14720 / NCIMB 2260 / Gabara)</name>
    <name type="common">Halobacterium pharaonis</name>
    <dbReference type="NCBI Taxonomy" id="348780"/>
    <lineage>
        <taxon>Archaea</taxon>
        <taxon>Methanobacteriati</taxon>
        <taxon>Methanobacteriota</taxon>
        <taxon>Stenosarchaea group</taxon>
        <taxon>Halobacteria</taxon>
        <taxon>Halobacteriales</taxon>
        <taxon>Haloarculaceae</taxon>
        <taxon>Natronomonas</taxon>
    </lineage>
</organism>
<feature type="chain" id="PRO_0000249166" description="Proline--tRNA ligase">
    <location>
        <begin position="1"/>
        <end position="482"/>
    </location>
</feature>
<comment type="function">
    <text evidence="1">Catalyzes the attachment of proline to tRNA(Pro) in a two-step reaction: proline is first activated by ATP to form Pro-AMP and then transferred to the acceptor end of tRNA(Pro).</text>
</comment>
<comment type="catalytic activity">
    <reaction evidence="1">
        <text>tRNA(Pro) + L-proline + ATP = L-prolyl-tRNA(Pro) + AMP + diphosphate</text>
        <dbReference type="Rhea" id="RHEA:14305"/>
        <dbReference type="Rhea" id="RHEA-COMP:9700"/>
        <dbReference type="Rhea" id="RHEA-COMP:9702"/>
        <dbReference type="ChEBI" id="CHEBI:30616"/>
        <dbReference type="ChEBI" id="CHEBI:33019"/>
        <dbReference type="ChEBI" id="CHEBI:60039"/>
        <dbReference type="ChEBI" id="CHEBI:78442"/>
        <dbReference type="ChEBI" id="CHEBI:78532"/>
        <dbReference type="ChEBI" id="CHEBI:456215"/>
        <dbReference type="EC" id="6.1.1.15"/>
    </reaction>
</comment>
<comment type="subunit">
    <text evidence="1">Homodimer.</text>
</comment>
<comment type="subcellular location">
    <subcellularLocation>
        <location evidence="1">Cytoplasm</location>
    </subcellularLocation>
</comment>
<comment type="domain">
    <text evidence="1">Consists of three domains: the N-terminal catalytic domain, the anticodon-binding domain and the C-terminal extension.</text>
</comment>
<comment type="similarity">
    <text evidence="1">Belongs to the class-II aminoacyl-tRNA synthetase family. ProS type 3 subfamily.</text>
</comment>
<gene>
    <name evidence="1" type="primary">proS</name>
    <name type="ordered locus">NP_1796A</name>
</gene>
<reference key="1">
    <citation type="journal article" date="2005" name="Genome Res.">
        <title>Living with two extremes: conclusions from the genome sequence of Natronomonas pharaonis.</title>
        <authorList>
            <person name="Falb M."/>
            <person name="Pfeiffer F."/>
            <person name="Palm P."/>
            <person name="Rodewald K."/>
            <person name="Hickmann V."/>
            <person name="Tittor J."/>
            <person name="Oesterhelt D."/>
        </authorList>
    </citation>
    <scope>NUCLEOTIDE SEQUENCE [LARGE SCALE GENOMIC DNA]</scope>
    <source>
        <strain>ATCC 35678 / DSM 2160 / CIP 103997 / JCM 8858 / NBRC 14720 / NCIMB 2260 / Gabara</strain>
    </source>
</reference>
<keyword id="KW-0030">Aminoacyl-tRNA synthetase</keyword>
<keyword id="KW-0067">ATP-binding</keyword>
<keyword id="KW-0963">Cytoplasm</keyword>
<keyword id="KW-0436">Ligase</keyword>
<keyword id="KW-0547">Nucleotide-binding</keyword>
<keyword id="KW-0648">Protein biosynthesis</keyword>
<keyword id="KW-1185">Reference proteome</keyword>
<dbReference type="EC" id="6.1.1.15" evidence="1"/>
<dbReference type="EMBL" id="CR936257">
    <property type="protein sequence ID" value="CAI48989.1"/>
    <property type="molecule type" value="Genomic_DNA"/>
</dbReference>
<dbReference type="RefSeq" id="WP_011322621.1">
    <property type="nucleotide sequence ID" value="NC_007426.1"/>
</dbReference>
<dbReference type="SMR" id="Q3IS99"/>
<dbReference type="STRING" id="348780.NP_1796A"/>
<dbReference type="EnsemblBacteria" id="CAI48989">
    <property type="protein sequence ID" value="CAI48989"/>
    <property type="gene ID" value="NP_1796A"/>
</dbReference>
<dbReference type="GeneID" id="3703057"/>
<dbReference type="KEGG" id="nph:NP_1796A"/>
<dbReference type="eggNOG" id="arCOG00402">
    <property type="taxonomic scope" value="Archaea"/>
</dbReference>
<dbReference type="HOGENOM" id="CLU_001882_4_2_2"/>
<dbReference type="OrthoDB" id="7375at2157"/>
<dbReference type="Proteomes" id="UP000002698">
    <property type="component" value="Chromosome"/>
</dbReference>
<dbReference type="GO" id="GO:0017101">
    <property type="term" value="C:aminoacyl-tRNA synthetase multienzyme complex"/>
    <property type="evidence" value="ECO:0007669"/>
    <property type="project" value="TreeGrafter"/>
</dbReference>
<dbReference type="GO" id="GO:0005737">
    <property type="term" value="C:cytoplasm"/>
    <property type="evidence" value="ECO:0007669"/>
    <property type="project" value="UniProtKB-SubCell"/>
</dbReference>
<dbReference type="GO" id="GO:0005524">
    <property type="term" value="F:ATP binding"/>
    <property type="evidence" value="ECO:0007669"/>
    <property type="project" value="UniProtKB-UniRule"/>
</dbReference>
<dbReference type="GO" id="GO:0004827">
    <property type="term" value="F:proline-tRNA ligase activity"/>
    <property type="evidence" value="ECO:0007669"/>
    <property type="project" value="UniProtKB-UniRule"/>
</dbReference>
<dbReference type="GO" id="GO:0006433">
    <property type="term" value="P:prolyl-tRNA aminoacylation"/>
    <property type="evidence" value="ECO:0007669"/>
    <property type="project" value="UniProtKB-UniRule"/>
</dbReference>
<dbReference type="CDD" id="cd00862">
    <property type="entry name" value="ProRS_anticodon_zinc"/>
    <property type="match status" value="1"/>
</dbReference>
<dbReference type="CDD" id="cd00778">
    <property type="entry name" value="ProRS_core_arch_euk"/>
    <property type="match status" value="1"/>
</dbReference>
<dbReference type="FunFam" id="3.30.930.10:FF:000037">
    <property type="entry name" value="Proline--tRNA ligase"/>
    <property type="match status" value="1"/>
</dbReference>
<dbReference type="Gene3D" id="3.40.50.800">
    <property type="entry name" value="Anticodon-binding domain"/>
    <property type="match status" value="1"/>
</dbReference>
<dbReference type="Gene3D" id="3.30.930.10">
    <property type="entry name" value="Bira Bifunctional Protein, Domain 2"/>
    <property type="match status" value="1"/>
</dbReference>
<dbReference type="Gene3D" id="3.30.110.30">
    <property type="entry name" value="C-terminal domain of ProRS"/>
    <property type="match status" value="1"/>
</dbReference>
<dbReference type="HAMAP" id="MF_01571">
    <property type="entry name" value="Pro_tRNA_synth_type3"/>
    <property type="match status" value="1"/>
</dbReference>
<dbReference type="InterPro" id="IPR002314">
    <property type="entry name" value="aa-tRNA-synt_IIb"/>
</dbReference>
<dbReference type="InterPro" id="IPR006195">
    <property type="entry name" value="aa-tRNA-synth_II"/>
</dbReference>
<dbReference type="InterPro" id="IPR045864">
    <property type="entry name" value="aa-tRNA-synth_II/BPL/LPL"/>
</dbReference>
<dbReference type="InterPro" id="IPR004154">
    <property type="entry name" value="Anticodon-bd"/>
</dbReference>
<dbReference type="InterPro" id="IPR036621">
    <property type="entry name" value="Anticodon-bd_dom_sf"/>
</dbReference>
<dbReference type="InterPro" id="IPR002316">
    <property type="entry name" value="Pro-tRNA-ligase_IIa"/>
</dbReference>
<dbReference type="InterPro" id="IPR004499">
    <property type="entry name" value="Pro-tRNA-ligase_IIa_arc-type"/>
</dbReference>
<dbReference type="InterPro" id="IPR016061">
    <property type="entry name" value="Pro-tRNA_ligase_II_C"/>
</dbReference>
<dbReference type="InterPro" id="IPR017449">
    <property type="entry name" value="Pro-tRNA_synth_II"/>
</dbReference>
<dbReference type="InterPro" id="IPR033721">
    <property type="entry name" value="ProRS_core_arch_euk"/>
</dbReference>
<dbReference type="NCBIfam" id="TIGR00408">
    <property type="entry name" value="proS_fam_I"/>
    <property type="match status" value="1"/>
</dbReference>
<dbReference type="PANTHER" id="PTHR43382:SF2">
    <property type="entry name" value="BIFUNCTIONAL GLUTAMATE_PROLINE--TRNA LIGASE"/>
    <property type="match status" value="1"/>
</dbReference>
<dbReference type="PANTHER" id="PTHR43382">
    <property type="entry name" value="PROLYL-TRNA SYNTHETASE"/>
    <property type="match status" value="1"/>
</dbReference>
<dbReference type="Pfam" id="PF03129">
    <property type="entry name" value="HGTP_anticodon"/>
    <property type="match status" value="1"/>
</dbReference>
<dbReference type="Pfam" id="PF09180">
    <property type="entry name" value="ProRS-C_1"/>
    <property type="match status" value="1"/>
</dbReference>
<dbReference type="Pfam" id="PF00587">
    <property type="entry name" value="tRNA-synt_2b"/>
    <property type="match status" value="1"/>
</dbReference>
<dbReference type="PRINTS" id="PR01046">
    <property type="entry name" value="TRNASYNTHPRO"/>
</dbReference>
<dbReference type="SMART" id="SM00946">
    <property type="entry name" value="ProRS-C_1"/>
    <property type="match status" value="1"/>
</dbReference>
<dbReference type="SUPFAM" id="SSF64586">
    <property type="entry name" value="C-terminal domain of ProRS"/>
    <property type="match status" value="1"/>
</dbReference>
<dbReference type="SUPFAM" id="SSF52954">
    <property type="entry name" value="Class II aaRS ABD-related"/>
    <property type="match status" value="1"/>
</dbReference>
<dbReference type="SUPFAM" id="SSF55681">
    <property type="entry name" value="Class II aaRS and biotin synthetases"/>
    <property type="match status" value="1"/>
</dbReference>
<dbReference type="PROSITE" id="PS50862">
    <property type="entry name" value="AA_TRNA_LIGASE_II"/>
    <property type="match status" value="1"/>
</dbReference>
<evidence type="ECO:0000255" key="1">
    <source>
        <dbReference type="HAMAP-Rule" id="MF_01571"/>
    </source>
</evidence>
<accession>Q3IS99</accession>
<proteinExistence type="inferred from homology"/>
<protein>
    <recommendedName>
        <fullName evidence="1">Proline--tRNA ligase</fullName>
        <ecNumber evidence="1">6.1.1.15</ecNumber>
    </recommendedName>
    <alternativeName>
        <fullName evidence="1">Prolyl-tRNA synthetase</fullName>
        <shortName evidence="1">ProRS</shortName>
    </alternativeName>
</protein>